<organism>
    <name type="scientific">Rhodopseudomonas palustris (strain BisB18)</name>
    <dbReference type="NCBI Taxonomy" id="316056"/>
    <lineage>
        <taxon>Bacteria</taxon>
        <taxon>Pseudomonadati</taxon>
        <taxon>Pseudomonadota</taxon>
        <taxon>Alphaproteobacteria</taxon>
        <taxon>Hyphomicrobiales</taxon>
        <taxon>Nitrobacteraceae</taxon>
        <taxon>Rhodopseudomonas</taxon>
    </lineage>
</organism>
<comment type="function">
    <text evidence="1">Specifically methylates guanosine-37 in various tRNAs.</text>
</comment>
<comment type="catalytic activity">
    <reaction evidence="1">
        <text>guanosine(37) in tRNA + S-adenosyl-L-methionine = N(1)-methylguanosine(37) in tRNA + S-adenosyl-L-homocysteine + H(+)</text>
        <dbReference type="Rhea" id="RHEA:36899"/>
        <dbReference type="Rhea" id="RHEA-COMP:10145"/>
        <dbReference type="Rhea" id="RHEA-COMP:10147"/>
        <dbReference type="ChEBI" id="CHEBI:15378"/>
        <dbReference type="ChEBI" id="CHEBI:57856"/>
        <dbReference type="ChEBI" id="CHEBI:59789"/>
        <dbReference type="ChEBI" id="CHEBI:73542"/>
        <dbReference type="ChEBI" id="CHEBI:74269"/>
        <dbReference type="EC" id="2.1.1.228"/>
    </reaction>
</comment>
<comment type="subunit">
    <text evidence="1">Homodimer.</text>
</comment>
<comment type="subcellular location">
    <subcellularLocation>
        <location evidence="1">Cytoplasm</location>
    </subcellularLocation>
</comment>
<comment type="similarity">
    <text evidence="1">Belongs to the RNA methyltransferase TrmD family.</text>
</comment>
<name>TRMD_RHOPB</name>
<gene>
    <name evidence="1" type="primary">trmD</name>
    <name type="ordered locus">RPC_0224</name>
</gene>
<dbReference type="EC" id="2.1.1.228" evidence="1"/>
<dbReference type="EMBL" id="CP000301">
    <property type="protein sequence ID" value="ABD85799.1"/>
    <property type="molecule type" value="Genomic_DNA"/>
</dbReference>
<dbReference type="SMR" id="Q21CT7"/>
<dbReference type="STRING" id="316056.RPC_0224"/>
<dbReference type="KEGG" id="rpc:RPC_0224"/>
<dbReference type="eggNOG" id="COG0336">
    <property type="taxonomic scope" value="Bacteria"/>
</dbReference>
<dbReference type="HOGENOM" id="CLU_047363_0_1_5"/>
<dbReference type="GO" id="GO:0005829">
    <property type="term" value="C:cytosol"/>
    <property type="evidence" value="ECO:0007669"/>
    <property type="project" value="TreeGrafter"/>
</dbReference>
<dbReference type="GO" id="GO:0052906">
    <property type="term" value="F:tRNA (guanine(37)-N1)-methyltransferase activity"/>
    <property type="evidence" value="ECO:0007669"/>
    <property type="project" value="UniProtKB-UniRule"/>
</dbReference>
<dbReference type="GO" id="GO:0002939">
    <property type="term" value="P:tRNA N1-guanine methylation"/>
    <property type="evidence" value="ECO:0007669"/>
    <property type="project" value="TreeGrafter"/>
</dbReference>
<dbReference type="CDD" id="cd18080">
    <property type="entry name" value="TrmD-like"/>
    <property type="match status" value="1"/>
</dbReference>
<dbReference type="FunFam" id="3.40.1280.10:FF:000001">
    <property type="entry name" value="tRNA (guanine-N(1)-)-methyltransferase"/>
    <property type="match status" value="1"/>
</dbReference>
<dbReference type="Gene3D" id="3.40.1280.10">
    <property type="match status" value="1"/>
</dbReference>
<dbReference type="Gene3D" id="1.10.1270.20">
    <property type="entry name" value="tRNA(m1g37)methyltransferase, domain 2"/>
    <property type="match status" value="1"/>
</dbReference>
<dbReference type="HAMAP" id="MF_00605">
    <property type="entry name" value="TrmD"/>
    <property type="match status" value="1"/>
</dbReference>
<dbReference type="InterPro" id="IPR029028">
    <property type="entry name" value="Alpha/beta_knot_MTases"/>
</dbReference>
<dbReference type="InterPro" id="IPR023148">
    <property type="entry name" value="tRNA_m1G_MeTrfase_C_sf"/>
</dbReference>
<dbReference type="InterPro" id="IPR002649">
    <property type="entry name" value="tRNA_m1G_MeTrfase_TrmD"/>
</dbReference>
<dbReference type="InterPro" id="IPR029026">
    <property type="entry name" value="tRNA_m1G_MTases_N"/>
</dbReference>
<dbReference type="InterPro" id="IPR016009">
    <property type="entry name" value="tRNA_MeTrfase_TRMD/TRM10"/>
</dbReference>
<dbReference type="NCBIfam" id="NF000648">
    <property type="entry name" value="PRK00026.1"/>
    <property type="match status" value="1"/>
</dbReference>
<dbReference type="NCBIfam" id="TIGR00088">
    <property type="entry name" value="trmD"/>
    <property type="match status" value="1"/>
</dbReference>
<dbReference type="PANTHER" id="PTHR46417">
    <property type="entry name" value="TRNA (GUANINE-N(1)-)-METHYLTRANSFERASE"/>
    <property type="match status" value="1"/>
</dbReference>
<dbReference type="PANTHER" id="PTHR46417:SF1">
    <property type="entry name" value="TRNA (GUANINE-N(1)-)-METHYLTRANSFERASE"/>
    <property type="match status" value="1"/>
</dbReference>
<dbReference type="Pfam" id="PF01746">
    <property type="entry name" value="tRNA_m1G_MT"/>
    <property type="match status" value="1"/>
</dbReference>
<dbReference type="PIRSF" id="PIRSF000386">
    <property type="entry name" value="tRNA_mtase"/>
    <property type="match status" value="1"/>
</dbReference>
<dbReference type="SUPFAM" id="SSF75217">
    <property type="entry name" value="alpha/beta knot"/>
    <property type="match status" value="1"/>
</dbReference>
<keyword id="KW-0963">Cytoplasm</keyword>
<keyword id="KW-0489">Methyltransferase</keyword>
<keyword id="KW-0949">S-adenosyl-L-methionine</keyword>
<keyword id="KW-0808">Transferase</keyword>
<keyword id="KW-0819">tRNA processing</keyword>
<protein>
    <recommendedName>
        <fullName evidence="1">tRNA (guanine-N(1)-)-methyltransferase</fullName>
        <ecNumber evidence="1">2.1.1.228</ecNumber>
    </recommendedName>
    <alternativeName>
        <fullName evidence="1">M1G-methyltransferase</fullName>
    </alternativeName>
    <alternativeName>
        <fullName evidence="1">tRNA [GM37] methyltransferase</fullName>
    </alternativeName>
</protein>
<evidence type="ECO:0000255" key="1">
    <source>
        <dbReference type="HAMAP-Rule" id="MF_00605"/>
    </source>
</evidence>
<evidence type="ECO:0000256" key="2">
    <source>
        <dbReference type="SAM" id="MobiDB-lite"/>
    </source>
</evidence>
<reference key="1">
    <citation type="submission" date="2006-03" db="EMBL/GenBank/DDBJ databases">
        <title>Complete sequence of Rhodopseudomonas palustris BisB18.</title>
        <authorList>
            <consortium name="US DOE Joint Genome Institute"/>
            <person name="Copeland A."/>
            <person name="Lucas S."/>
            <person name="Lapidus A."/>
            <person name="Barry K."/>
            <person name="Detter J.C."/>
            <person name="Glavina del Rio T."/>
            <person name="Hammon N."/>
            <person name="Israni S."/>
            <person name="Dalin E."/>
            <person name="Tice H."/>
            <person name="Pitluck S."/>
            <person name="Chain P."/>
            <person name="Malfatti S."/>
            <person name="Shin M."/>
            <person name="Vergez L."/>
            <person name="Schmutz J."/>
            <person name="Larimer F."/>
            <person name="Land M."/>
            <person name="Hauser L."/>
            <person name="Pelletier D.A."/>
            <person name="Kyrpides N."/>
            <person name="Anderson I."/>
            <person name="Oda Y."/>
            <person name="Harwood C.S."/>
            <person name="Richardson P."/>
        </authorList>
    </citation>
    <scope>NUCLEOTIDE SEQUENCE [LARGE SCALE GENOMIC DNA]</scope>
    <source>
        <strain>BisB18</strain>
    </source>
</reference>
<feature type="chain" id="PRO_0000257460" description="tRNA (guanine-N(1)-)-methyltransferase">
    <location>
        <begin position="1"/>
        <end position="251"/>
    </location>
</feature>
<feature type="region of interest" description="Disordered" evidence="2">
    <location>
        <begin position="226"/>
        <end position="251"/>
    </location>
</feature>
<feature type="compositionally biased region" description="Polar residues" evidence="2">
    <location>
        <begin position="237"/>
        <end position="251"/>
    </location>
</feature>
<feature type="binding site" evidence="1">
    <location>
        <position position="122"/>
    </location>
    <ligand>
        <name>S-adenosyl-L-methionine</name>
        <dbReference type="ChEBI" id="CHEBI:59789"/>
    </ligand>
</feature>
<feature type="binding site" evidence="1">
    <location>
        <begin position="142"/>
        <end position="147"/>
    </location>
    <ligand>
        <name>S-adenosyl-L-methionine</name>
        <dbReference type="ChEBI" id="CHEBI:59789"/>
    </ligand>
</feature>
<accession>Q21CT7</accession>
<proteinExistence type="inferred from homology"/>
<sequence>MSKAMSCEPTPWRATVLTLFPEMFPGPLGVSLAGRALATGLWALEVRDIRDSATDKHRSVDDTPAGGGPGMVLRADVLAAAIDAADAGETRPRLVMSPRGRPLTQAKVAELAAGPGPLIVCGRFEGIDQRVIDARDLEEVSIGDYVLSGGEIAALALLDACVRLLPGVMGKQGSALEESFSDGLLEYPQYTRPQLFEERPIPEILTSGDHAKVAAWRRAEAEKLTRARRPDLFATRPQPNRQKPPKNTTDG</sequence>